<organism>
    <name type="scientific">Escherichia coli O6:H1 (strain CFT073 / ATCC 700928 / UPEC)</name>
    <dbReference type="NCBI Taxonomy" id="199310"/>
    <lineage>
        <taxon>Bacteria</taxon>
        <taxon>Pseudomonadati</taxon>
        <taxon>Pseudomonadota</taxon>
        <taxon>Gammaproteobacteria</taxon>
        <taxon>Enterobacterales</taxon>
        <taxon>Enterobacteriaceae</taxon>
        <taxon>Escherichia</taxon>
    </lineage>
</organism>
<dbReference type="EC" id="7.6.2.14" evidence="1"/>
<dbReference type="EMBL" id="AE014075">
    <property type="protein sequence ID" value="AAN79544.1"/>
    <property type="molecule type" value="Genomic_DNA"/>
</dbReference>
<dbReference type="RefSeq" id="WP_001090484.1">
    <property type="nucleotide sequence ID" value="NZ_CP051263.1"/>
</dbReference>
<dbReference type="SMR" id="Q8FJ95"/>
<dbReference type="STRING" id="199310.c1076"/>
<dbReference type="KEGG" id="ecc:c1076"/>
<dbReference type="eggNOG" id="COG1116">
    <property type="taxonomic scope" value="Bacteria"/>
</dbReference>
<dbReference type="HOGENOM" id="CLU_000604_1_22_6"/>
<dbReference type="BioCyc" id="ECOL199310:C1076-MONOMER"/>
<dbReference type="Proteomes" id="UP000001410">
    <property type="component" value="Chromosome"/>
</dbReference>
<dbReference type="GO" id="GO:0005886">
    <property type="term" value="C:plasma membrane"/>
    <property type="evidence" value="ECO:0007669"/>
    <property type="project" value="UniProtKB-SubCell"/>
</dbReference>
<dbReference type="GO" id="GO:0005524">
    <property type="term" value="F:ATP binding"/>
    <property type="evidence" value="ECO:0007669"/>
    <property type="project" value="UniProtKB-KW"/>
</dbReference>
<dbReference type="GO" id="GO:0016887">
    <property type="term" value="F:ATP hydrolysis activity"/>
    <property type="evidence" value="ECO:0007669"/>
    <property type="project" value="InterPro"/>
</dbReference>
<dbReference type="CDD" id="cd03293">
    <property type="entry name" value="ABC_NrtD_SsuB_transporters"/>
    <property type="match status" value="1"/>
</dbReference>
<dbReference type="FunFam" id="3.40.50.300:FF:000653">
    <property type="entry name" value="Aliphatic sulfonates import ATP-binding protein SsuB"/>
    <property type="match status" value="1"/>
</dbReference>
<dbReference type="Gene3D" id="3.40.50.300">
    <property type="entry name" value="P-loop containing nucleotide triphosphate hydrolases"/>
    <property type="match status" value="1"/>
</dbReference>
<dbReference type="InterPro" id="IPR003593">
    <property type="entry name" value="AAA+_ATPase"/>
</dbReference>
<dbReference type="InterPro" id="IPR003439">
    <property type="entry name" value="ABC_transporter-like_ATP-bd"/>
</dbReference>
<dbReference type="InterPro" id="IPR017871">
    <property type="entry name" value="ABC_transporter-like_CS"/>
</dbReference>
<dbReference type="InterPro" id="IPR050166">
    <property type="entry name" value="ABC_transporter_ATP-bind"/>
</dbReference>
<dbReference type="InterPro" id="IPR027417">
    <property type="entry name" value="P-loop_NTPase"/>
</dbReference>
<dbReference type="NCBIfam" id="NF008420">
    <property type="entry name" value="PRK11247.1"/>
    <property type="match status" value="1"/>
</dbReference>
<dbReference type="PANTHER" id="PTHR42788:SF17">
    <property type="entry name" value="ALIPHATIC SULFONATES IMPORT ATP-BINDING PROTEIN SSUB"/>
    <property type="match status" value="1"/>
</dbReference>
<dbReference type="PANTHER" id="PTHR42788">
    <property type="entry name" value="TAURINE IMPORT ATP-BINDING PROTEIN-RELATED"/>
    <property type="match status" value="1"/>
</dbReference>
<dbReference type="Pfam" id="PF00005">
    <property type="entry name" value="ABC_tran"/>
    <property type="match status" value="1"/>
</dbReference>
<dbReference type="SMART" id="SM00382">
    <property type="entry name" value="AAA"/>
    <property type="match status" value="1"/>
</dbReference>
<dbReference type="SUPFAM" id="SSF52540">
    <property type="entry name" value="P-loop containing nucleoside triphosphate hydrolases"/>
    <property type="match status" value="1"/>
</dbReference>
<dbReference type="PROSITE" id="PS00211">
    <property type="entry name" value="ABC_TRANSPORTER_1"/>
    <property type="match status" value="1"/>
</dbReference>
<dbReference type="PROSITE" id="PS50893">
    <property type="entry name" value="ABC_TRANSPORTER_2"/>
    <property type="match status" value="1"/>
</dbReference>
<dbReference type="PROSITE" id="PS51291">
    <property type="entry name" value="SSUB"/>
    <property type="match status" value="1"/>
</dbReference>
<reference key="1">
    <citation type="journal article" date="2002" name="Proc. Natl. Acad. Sci. U.S.A.">
        <title>Extensive mosaic structure revealed by the complete genome sequence of uropathogenic Escherichia coli.</title>
        <authorList>
            <person name="Welch R.A."/>
            <person name="Burland V."/>
            <person name="Plunkett G. III"/>
            <person name="Redford P."/>
            <person name="Roesch P."/>
            <person name="Rasko D."/>
            <person name="Buckles E.L."/>
            <person name="Liou S.-R."/>
            <person name="Boutin A."/>
            <person name="Hackett J."/>
            <person name="Stroud D."/>
            <person name="Mayhew G.F."/>
            <person name="Rose D.J."/>
            <person name="Zhou S."/>
            <person name="Schwartz D.C."/>
            <person name="Perna N.T."/>
            <person name="Mobley H.L.T."/>
            <person name="Donnenberg M.S."/>
            <person name="Blattner F.R."/>
        </authorList>
    </citation>
    <scope>NUCLEOTIDE SEQUENCE [LARGE SCALE GENOMIC DNA]</scope>
    <source>
        <strain>CFT073 / ATCC 700928 / UPEC</strain>
    </source>
</reference>
<comment type="function">
    <text evidence="1">Part of the ABC transporter complex SsuABC involved in aliphatic sulfonates import. Responsible for energy coupling to the transport system.</text>
</comment>
<comment type="catalytic activity">
    <reaction evidence="1">
        <text>ATP + H2O + aliphatic sulfonate-[sulfonate-binding protein]Side 1 = ADP + phosphate + aliphatic sulfonateSide 2 + [sulfonate-binding protein]Side 1.</text>
        <dbReference type="EC" id="7.6.2.14"/>
    </reaction>
</comment>
<comment type="subunit">
    <text evidence="1">The complex is composed of two ATP-binding proteins (SsuB), two transmembrane proteins (SsuC) and a solute-binding protein (SsuA).</text>
</comment>
<comment type="subcellular location">
    <subcellularLocation>
        <location evidence="1">Cell inner membrane</location>
        <topology evidence="1">Peripheral membrane protein</topology>
    </subcellularLocation>
</comment>
<comment type="similarity">
    <text evidence="1">Belongs to the ABC transporter superfamily. Aliphatic sulfonates importer (TC 3.A.1.17.2) family.</text>
</comment>
<protein>
    <recommendedName>
        <fullName evidence="1">Aliphatic sulfonates import ATP-binding protein SsuB</fullName>
        <ecNumber evidence="1">7.6.2.14</ecNumber>
    </recommendedName>
</protein>
<keyword id="KW-0067">ATP-binding</keyword>
<keyword id="KW-0997">Cell inner membrane</keyword>
<keyword id="KW-1003">Cell membrane</keyword>
<keyword id="KW-0472">Membrane</keyword>
<keyword id="KW-0547">Nucleotide-binding</keyword>
<keyword id="KW-1185">Reference proteome</keyword>
<keyword id="KW-1278">Translocase</keyword>
<keyword id="KW-0813">Transport</keyword>
<gene>
    <name evidence="1" type="primary">ssuB</name>
    <name type="ordered locus">c1076</name>
</gene>
<sequence length="255" mass="27693">MNTARLNQGTPLLLNAVSKHYAENIVLNQLDLHIPAGQFVAVVGRSGGGKSTLLRLLAGLETPTAGDVLAGTTPLAEIQDDTRMMFQDARLLPWKSVIDNVGLGLKGQWRDAARQALAAVGLENRAGEWPAALSGGQKQRVALARALIHRPGLLLLDEPLGALDALTRLEMQDLIVSLWLKHGFTVLLVTHDVSEAVAMADRVLLIEEGKIGLDLTVDIPRPRRLGSVRLAELEAEVLQRVMQRGHSEQPIRRHG</sequence>
<evidence type="ECO:0000255" key="1">
    <source>
        <dbReference type="HAMAP-Rule" id="MF_01724"/>
    </source>
</evidence>
<name>SSUB_ECOL6</name>
<feature type="chain" id="PRO_0000279914" description="Aliphatic sulfonates import ATP-binding protein SsuB">
    <location>
        <begin position="1"/>
        <end position="255"/>
    </location>
</feature>
<feature type="domain" description="ABC transporter" evidence="1">
    <location>
        <begin position="12"/>
        <end position="233"/>
    </location>
</feature>
<feature type="binding site" evidence="1">
    <location>
        <begin position="44"/>
        <end position="51"/>
    </location>
    <ligand>
        <name>ATP</name>
        <dbReference type="ChEBI" id="CHEBI:30616"/>
    </ligand>
</feature>
<accession>Q8FJ95</accession>
<proteinExistence type="inferred from homology"/>